<dbReference type="EC" id="7.1.1.-" evidence="1"/>
<dbReference type="EMBL" id="CP000438">
    <property type="protein sequence ID" value="ABJ11860.1"/>
    <property type="molecule type" value="Genomic_DNA"/>
</dbReference>
<dbReference type="RefSeq" id="WP_003090452.1">
    <property type="nucleotide sequence ID" value="NZ_CP034244.1"/>
</dbReference>
<dbReference type="SMR" id="Q02NC9"/>
<dbReference type="KEGG" id="pau:PA14_30020"/>
<dbReference type="PseudoCAP" id="PA14_30020"/>
<dbReference type="HOGENOM" id="CLU_119549_2_1_6"/>
<dbReference type="BioCyc" id="PAER208963:G1G74-2513-MONOMER"/>
<dbReference type="Proteomes" id="UP000000653">
    <property type="component" value="Chromosome"/>
</dbReference>
<dbReference type="GO" id="GO:0030964">
    <property type="term" value="C:NADH dehydrogenase complex"/>
    <property type="evidence" value="ECO:0007669"/>
    <property type="project" value="TreeGrafter"/>
</dbReference>
<dbReference type="GO" id="GO:0005886">
    <property type="term" value="C:plasma membrane"/>
    <property type="evidence" value="ECO:0007669"/>
    <property type="project" value="UniProtKB-SubCell"/>
</dbReference>
<dbReference type="GO" id="GO:0008137">
    <property type="term" value="F:NADH dehydrogenase (ubiquinone) activity"/>
    <property type="evidence" value="ECO:0007669"/>
    <property type="project" value="InterPro"/>
</dbReference>
<dbReference type="GO" id="GO:0050136">
    <property type="term" value="F:NADH:ubiquinone reductase (non-electrogenic) activity"/>
    <property type="evidence" value="ECO:0007669"/>
    <property type="project" value="UniProtKB-UniRule"/>
</dbReference>
<dbReference type="GO" id="GO:0048038">
    <property type="term" value="F:quinone binding"/>
    <property type="evidence" value="ECO:0007669"/>
    <property type="project" value="UniProtKB-KW"/>
</dbReference>
<dbReference type="FunFam" id="1.20.58.1610:FF:000003">
    <property type="entry name" value="NADH-quinone oxidoreductase subunit A"/>
    <property type="match status" value="1"/>
</dbReference>
<dbReference type="Gene3D" id="1.20.58.1610">
    <property type="entry name" value="NADH:ubiquinone/plastoquinone oxidoreductase, chain 3"/>
    <property type="match status" value="1"/>
</dbReference>
<dbReference type="HAMAP" id="MF_01394">
    <property type="entry name" value="NDH1_NuoA"/>
    <property type="match status" value="1"/>
</dbReference>
<dbReference type="InterPro" id="IPR023043">
    <property type="entry name" value="NAD(P)H_OxRDtase_bac/plastid"/>
</dbReference>
<dbReference type="InterPro" id="IPR000440">
    <property type="entry name" value="NADH_UbQ/plastoQ_OxRdtase_su3"/>
</dbReference>
<dbReference type="InterPro" id="IPR038430">
    <property type="entry name" value="NDAH_ubi_oxred_su3_sf"/>
</dbReference>
<dbReference type="PANTHER" id="PTHR11058:SF21">
    <property type="entry name" value="NADH-QUINONE OXIDOREDUCTASE SUBUNIT A"/>
    <property type="match status" value="1"/>
</dbReference>
<dbReference type="PANTHER" id="PTHR11058">
    <property type="entry name" value="NADH-UBIQUINONE OXIDOREDUCTASE CHAIN 3"/>
    <property type="match status" value="1"/>
</dbReference>
<dbReference type="Pfam" id="PF00507">
    <property type="entry name" value="Oxidored_q4"/>
    <property type="match status" value="1"/>
</dbReference>
<organism>
    <name type="scientific">Pseudomonas aeruginosa (strain UCBPP-PA14)</name>
    <dbReference type="NCBI Taxonomy" id="208963"/>
    <lineage>
        <taxon>Bacteria</taxon>
        <taxon>Pseudomonadati</taxon>
        <taxon>Pseudomonadota</taxon>
        <taxon>Gammaproteobacteria</taxon>
        <taxon>Pseudomonadales</taxon>
        <taxon>Pseudomonadaceae</taxon>
        <taxon>Pseudomonas</taxon>
    </lineage>
</organism>
<protein>
    <recommendedName>
        <fullName evidence="1">NADH-quinone oxidoreductase subunit A 1</fullName>
        <ecNumber evidence="1">7.1.1.-</ecNumber>
    </recommendedName>
    <alternativeName>
        <fullName evidence="1">NADH dehydrogenase I subunit A 1</fullName>
    </alternativeName>
    <alternativeName>
        <fullName evidence="1">NDH-1 subunit A 1</fullName>
    </alternativeName>
    <alternativeName>
        <fullName evidence="1">NUO1 1</fullName>
    </alternativeName>
</protein>
<gene>
    <name evidence="1" type="primary">nuoA1</name>
    <name type="ordered locus">PA14_30020</name>
</gene>
<evidence type="ECO:0000255" key="1">
    <source>
        <dbReference type="HAMAP-Rule" id="MF_01394"/>
    </source>
</evidence>
<name>NUOA1_PSEAB</name>
<comment type="function">
    <text evidence="1">NDH-1 shuttles electrons from NADH, via FMN and iron-sulfur (Fe-S) centers, to quinones in the respiratory chain. The immediate electron acceptor for the enzyme in this species is believed to be ubiquinone. Couples the redox reaction to proton translocation (for every two electrons transferred, four hydrogen ions are translocated across the cytoplasmic membrane), and thus conserves the redox energy in a proton gradient.</text>
</comment>
<comment type="catalytic activity">
    <reaction evidence="1">
        <text>a quinone + NADH + 5 H(+)(in) = a quinol + NAD(+) + 4 H(+)(out)</text>
        <dbReference type="Rhea" id="RHEA:57888"/>
        <dbReference type="ChEBI" id="CHEBI:15378"/>
        <dbReference type="ChEBI" id="CHEBI:24646"/>
        <dbReference type="ChEBI" id="CHEBI:57540"/>
        <dbReference type="ChEBI" id="CHEBI:57945"/>
        <dbReference type="ChEBI" id="CHEBI:132124"/>
    </reaction>
</comment>
<comment type="subunit">
    <text evidence="1">NDH-1 is composed of 13 different subunits. Subunits NuoA, H, J, K, L, M, N constitute the membrane sector of the complex.</text>
</comment>
<comment type="subcellular location">
    <subcellularLocation>
        <location evidence="1">Cell inner membrane</location>
        <topology evidence="1">Multi-pass membrane protein</topology>
    </subcellularLocation>
</comment>
<comment type="similarity">
    <text evidence="1">Belongs to the complex I subunit 3 family.</text>
</comment>
<reference key="1">
    <citation type="journal article" date="2006" name="Genome Biol.">
        <title>Genomic analysis reveals that Pseudomonas aeruginosa virulence is combinatorial.</title>
        <authorList>
            <person name="Lee D.G."/>
            <person name="Urbach J.M."/>
            <person name="Wu G."/>
            <person name="Liberati N.T."/>
            <person name="Feinbaum R.L."/>
            <person name="Miyata S."/>
            <person name="Diggins L.T."/>
            <person name="He J."/>
            <person name="Saucier M."/>
            <person name="Deziel E."/>
            <person name="Friedman L."/>
            <person name="Li L."/>
            <person name="Grills G."/>
            <person name="Montgomery K."/>
            <person name="Kucherlapati R."/>
            <person name="Rahme L.G."/>
            <person name="Ausubel F.M."/>
        </authorList>
    </citation>
    <scope>NUCLEOTIDE SEQUENCE [LARGE SCALE GENOMIC DNA]</scope>
    <source>
        <strain>UCBPP-PA14</strain>
    </source>
</reference>
<sequence>MPNPAELAAHHWGFAAFLLGVVGLLAFMLGVSSLLGSKAFGRSKNEPFESGIVPTGGARLRLSAKFYLVAMLFVIFDVEALFLFAWSVSVRESGWAGLIEATIFIAILLAGLVYLWRIGALDWAPESRRKRQAKLKQ</sequence>
<feature type="chain" id="PRO_0000362736" description="NADH-quinone oxidoreductase subunit A 1">
    <location>
        <begin position="1"/>
        <end position="137"/>
    </location>
</feature>
<feature type="transmembrane region" description="Helical" evidence="1">
    <location>
        <begin position="12"/>
        <end position="32"/>
    </location>
</feature>
<feature type="transmembrane region" description="Helical" evidence="1">
    <location>
        <begin position="66"/>
        <end position="86"/>
    </location>
</feature>
<feature type="transmembrane region" description="Helical" evidence="1">
    <location>
        <begin position="95"/>
        <end position="115"/>
    </location>
</feature>
<proteinExistence type="inferred from homology"/>
<accession>Q02NC9</accession>
<keyword id="KW-0997">Cell inner membrane</keyword>
<keyword id="KW-1003">Cell membrane</keyword>
<keyword id="KW-0472">Membrane</keyword>
<keyword id="KW-0520">NAD</keyword>
<keyword id="KW-0874">Quinone</keyword>
<keyword id="KW-1278">Translocase</keyword>
<keyword id="KW-0812">Transmembrane</keyword>
<keyword id="KW-1133">Transmembrane helix</keyword>
<keyword id="KW-0813">Transport</keyword>
<keyword id="KW-0830">Ubiquinone</keyword>